<proteinExistence type="evidence at protein level"/>
<accession>Q5XJV7</accession>
<accession>Q80T94</accession>
<accession>Q8BKD5</accession>
<accession>Q8BX30</accession>
<organism>
    <name type="scientific">Mus musculus</name>
    <name type="common">Mouse</name>
    <dbReference type="NCBI Taxonomy" id="10090"/>
    <lineage>
        <taxon>Eukaryota</taxon>
        <taxon>Metazoa</taxon>
        <taxon>Chordata</taxon>
        <taxon>Craniata</taxon>
        <taxon>Vertebrata</taxon>
        <taxon>Euteleostomi</taxon>
        <taxon>Mammalia</taxon>
        <taxon>Eutheria</taxon>
        <taxon>Euarchontoglires</taxon>
        <taxon>Glires</taxon>
        <taxon>Rodentia</taxon>
        <taxon>Myomorpha</taxon>
        <taxon>Muroidea</taxon>
        <taxon>Muridae</taxon>
        <taxon>Murinae</taxon>
        <taxon>Mus</taxon>
        <taxon>Mus</taxon>
    </lineage>
</organism>
<feature type="chain" id="PRO_0000281906" description="Histone-lysine N-methyltransferase SETD5">
    <location>
        <begin position="1"/>
        <end position="1441"/>
    </location>
</feature>
<feature type="domain" description="SET" evidence="2">
    <location>
        <begin position="269"/>
        <end position="390"/>
    </location>
</feature>
<feature type="region of interest" description="Disordered" evidence="3">
    <location>
        <begin position="1"/>
        <end position="28"/>
    </location>
</feature>
<feature type="region of interest" description="Disordered" evidence="3">
    <location>
        <begin position="156"/>
        <end position="202"/>
    </location>
</feature>
<feature type="region of interest" description="Disordered" evidence="3">
    <location>
        <begin position="417"/>
        <end position="683"/>
    </location>
</feature>
<feature type="region of interest" description="Disordered" evidence="3">
    <location>
        <begin position="793"/>
        <end position="816"/>
    </location>
</feature>
<feature type="region of interest" description="Disordered" evidence="3">
    <location>
        <begin position="849"/>
        <end position="883"/>
    </location>
</feature>
<feature type="region of interest" description="Disordered" evidence="3">
    <location>
        <begin position="1036"/>
        <end position="1228"/>
    </location>
</feature>
<feature type="region of interest" description="Disordered" evidence="3">
    <location>
        <begin position="1243"/>
        <end position="1441"/>
    </location>
</feature>
<feature type="compositionally biased region" description="Basic residues" evidence="3">
    <location>
        <begin position="165"/>
        <end position="189"/>
    </location>
</feature>
<feature type="compositionally biased region" description="Polar residues" evidence="3">
    <location>
        <begin position="190"/>
        <end position="202"/>
    </location>
</feature>
<feature type="compositionally biased region" description="Acidic residues" evidence="3">
    <location>
        <begin position="450"/>
        <end position="461"/>
    </location>
</feature>
<feature type="compositionally biased region" description="Acidic residues" evidence="3">
    <location>
        <begin position="479"/>
        <end position="501"/>
    </location>
</feature>
<feature type="compositionally biased region" description="Low complexity" evidence="3">
    <location>
        <begin position="539"/>
        <end position="552"/>
    </location>
</feature>
<feature type="compositionally biased region" description="Low complexity" evidence="3">
    <location>
        <begin position="561"/>
        <end position="572"/>
    </location>
</feature>
<feature type="compositionally biased region" description="Polar residues" evidence="3">
    <location>
        <begin position="575"/>
        <end position="588"/>
    </location>
</feature>
<feature type="compositionally biased region" description="Basic residues" evidence="3">
    <location>
        <begin position="611"/>
        <end position="621"/>
    </location>
</feature>
<feature type="compositionally biased region" description="Low complexity" evidence="3">
    <location>
        <begin position="635"/>
        <end position="650"/>
    </location>
</feature>
<feature type="compositionally biased region" description="Polar residues" evidence="3">
    <location>
        <begin position="652"/>
        <end position="683"/>
    </location>
</feature>
<feature type="compositionally biased region" description="Basic residues" evidence="3">
    <location>
        <begin position="1062"/>
        <end position="1076"/>
    </location>
</feature>
<feature type="compositionally biased region" description="Low complexity" evidence="3">
    <location>
        <begin position="1087"/>
        <end position="1107"/>
    </location>
</feature>
<feature type="compositionally biased region" description="Polar residues" evidence="3">
    <location>
        <begin position="1144"/>
        <end position="1163"/>
    </location>
</feature>
<feature type="compositionally biased region" description="Low complexity" evidence="3">
    <location>
        <begin position="1250"/>
        <end position="1259"/>
    </location>
</feature>
<feature type="compositionally biased region" description="Polar residues" evidence="3">
    <location>
        <begin position="1265"/>
        <end position="1275"/>
    </location>
</feature>
<feature type="compositionally biased region" description="Low complexity" evidence="3">
    <location>
        <begin position="1284"/>
        <end position="1300"/>
    </location>
</feature>
<feature type="compositionally biased region" description="Polar residues" evidence="3">
    <location>
        <begin position="1319"/>
        <end position="1333"/>
    </location>
</feature>
<feature type="compositionally biased region" description="Low complexity" evidence="3">
    <location>
        <begin position="1335"/>
        <end position="1372"/>
    </location>
</feature>
<feature type="compositionally biased region" description="Polar residues" evidence="3">
    <location>
        <begin position="1373"/>
        <end position="1382"/>
    </location>
</feature>
<feature type="compositionally biased region" description="Polar residues" evidence="3">
    <location>
        <begin position="1389"/>
        <end position="1412"/>
    </location>
</feature>
<feature type="compositionally biased region" description="Polar residues" evidence="3">
    <location>
        <begin position="1429"/>
        <end position="1441"/>
    </location>
</feature>
<feature type="modified residue" description="Phosphoserine" evidence="17">
    <location>
        <position position="72"/>
    </location>
</feature>
<feature type="modified residue" description="Phosphoserine" evidence="1">
    <location>
        <position position="829"/>
    </location>
</feature>
<feature type="modified residue" description="Phosphoserine" evidence="16 17">
    <location>
        <position position="852"/>
    </location>
</feature>
<feature type="modified residue" description="Phosphothreonine" evidence="17">
    <location>
        <position position="855"/>
    </location>
</feature>
<feature type="modified residue" description="Phosphoserine" evidence="1">
    <location>
        <position position="1197"/>
    </location>
</feature>
<feature type="splice variant" id="VSP_024096" description="In isoform 3." evidence="11">
    <location>
        <begin position="1"/>
        <end position="792"/>
    </location>
</feature>
<feature type="splice variant" id="VSP_024097" description="In isoform 2." evidence="10">
    <original>A</original>
    <variation>ADHNYGAPPPPTPPASPPVQ</variation>
    <location>
        <position position="59"/>
    </location>
</feature>
<feature type="sequence conflict" description="In Ref. 3; AAH83184." evidence="13" ref="3">
    <original>L</original>
    <variation>F</variation>
    <location>
        <position position="1381"/>
    </location>
</feature>
<feature type="modified residue" description="Phosphothreonine" evidence="17">
    <location sequence="Q5XJV7-2">
        <position position="70"/>
    </location>
</feature>
<feature type="modified residue" description="Phosphoserine" evidence="17">
    <location sequence="Q5XJV7-2">
        <position position="74"/>
    </location>
</feature>
<gene>
    <name evidence="12 15" type="primary">Setd5</name>
    <name evidence="9" type="synonym">Kiaa1757</name>
</gene>
<name>SETD5_MOUSE</name>
<dbReference type="EC" id="2.1.1.359" evidence="8"/>
<dbReference type="EC" id="2.1.1.367" evidence="14"/>
<dbReference type="EMBL" id="AK122551">
    <property type="protein sequence ID" value="BAC65833.1"/>
    <property type="status" value="ALT_INIT"/>
    <property type="molecule type" value="mRNA"/>
</dbReference>
<dbReference type="EMBL" id="AK049143">
    <property type="protein sequence ID" value="BAC33569.1"/>
    <property type="status" value="ALT_INIT"/>
    <property type="molecule type" value="mRNA"/>
</dbReference>
<dbReference type="EMBL" id="AK053541">
    <property type="protein sequence ID" value="BAC35420.1"/>
    <property type="molecule type" value="mRNA"/>
</dbReference>
<dbReference type="EMBL" id="BC083184">
    <property type="protein sequence ID" value="AAH83184.1"/>
    <property type="molecule type" value="mRNA"/>
</dbReference>
<dbReference type="CCDS" id="CCDS20411.1">
    <molecule id="Q5XJV7-1"/>
</dbReference>
<dbReference type="CCDS" id="CCDS90096.1">
    <molecule id="Q5XJV7-2"/>
</dbReference>
<dbReference type="RefSeq" id="NP_082661.1">
    <molecule id="Q5XJV7-1"/>
    <property type="nucleotide sequence ID" value="NM_028385.1"/>
</dbReference>
<dbReference type="RefSeq" id="NP_766593.1">
    <molecule id="Q5XJV7-2"/>
    <property type="nucleotide sequence ID" value="NM_173005.1"/>
</dbReference>
<dbReference type="RefSeq" id="XP_011239784.1">
    <molecule id="Q5XJV7-2"/>
    <property type="nucleotide sequence ID" value="XM_011241482.4"/>
</dbReference>
<dbReference type="RefSeq" id="XP_036008226.1">
    <molecule id="Q5XJV7-2"/>
    <property type="nucleotide sequence ID" value="XM_036152333.1"/>
</dbReference>
<dbReference type="BioGRID" id="215631">
    <property type="interactions" value="6"/>
</dbReference>
<dbReference type="FunCoup" id="Q5XJV7">
    <property type="interactions" value="4139"/>
</dbReference>
<dbReference type="IntAct" id="Q5XJV7">
    <property type="interactions" value="6"/>
</dbReference>
<dbReference type="STRING" id="10090.ENSMUSP00000047398"/>
<dbReference type="GlyGen" id="Q5XJV7">
    <property type="glycosylation" value="4 sites"/>
</dbReference>
<dbReference type="iPTMnet" id="Q5XJV7"/>
<dbReference type="PhosphoSitePlus" id="Q5XJV7"/>
<dbReference type="jPOST" id="Q5XJV7"/>
<dbReference type="PaxDb" id="10090-ENSMUSP00000047398"/>
<dbReference type="PeptideAtlas" id="Q5XJV7"/>
<dbReference type="ProteomicsDB" id="261498">
    <molecule id="Q5XJV7-1"/>
</dbReference>
<dbReference type="ProteomicsDB" id="261499">
    <molecule id="Q5XJV7-2"/>
</dbReference>
<dbReference type="ProteomicsDB" id="261500">
    <molecule id="Q5XJV7-3"/>
</dbReference>
<dbReference type="Pumba" id="Q5XJV7"/>
<dbReference type="Antibodypedia" id="60053">
    <property type="antibodies" value="84 antibodies from 17 providers"/>
</dbReference>
<dbReference type="DNASU" id="72895"/>
<dbReference type="Ensembl" id="ENSMUST00000042889.12">
    <molecule id="Q5XJV7-1"/>
    <property type="protein sequence ID" value="ENSMUSP00000047398.6"/>
    <property type="gene ID" value="ENSMUSG00000034269.13"/>
</dbReference>
<dbReference type="Ensembl" id="ENSMUST00000113155.2">
    <molecule id="Q5XJV7-2"/>
    <property type="protein sequence ID" value="ENSMUSP00000108780.2"/>
    <property type="gene ID" value="ENSMUSG00000034269.13"/>
</dbReference>
<dbReference type="Ensembl" id="ENSMUST00000113157.8">
    <molecule id="Q5XJV7-2"/>
    <property type="protein sequence ID" value="ENSMUSP00000108782.2"/>
    <property type="gene ID" value="ENSMUSG00000034269.13"/>
</dbReference>
<dbReference type="GeneID" id="72895"/>
<dbReference type="KEGG" id="mmu:72895"/>
<dbReference type="UCSC" id="uc009deq.1">
    <molecule id="Q5XJV7-1"/>
    <property type="organism name" value="mouse"/>
</dbReference>
<dbReference type="UCSC" id="uc009der.1">
    <molecule id="Q5XJV7-2"/>
    <property type="organism name" value="mouse"/>
</dbReference>
<dbReference type="UCSC" id="uc009deu.1">
    <molecule id="Q5XJV7-3"/>
    <property type="organism name" value="mouse"/>
</dbReference>
<dbReference type="AGR" id="MGI:1920145"/>
<dbReference type="CTD" id="55209"/>
<dbReference type="MGI" id="MGI:1920145">
    <property type="gene designation" value="Setd5"/>
</dbReference>
<dbReference type="VEuPathDB" id="HostDB:ENSMUSG00000034269"/>
<dbReference type="eggNOG" id="KOG1844">
    <property type="taxonomic scope" value="Eukaryota"/>
</dbReference>
<dbReference type="GeneTree" id="ENSGT00940000157446"/>
<dbReference type="HOGENOM" id="CLU_002373_0_0_1"/>
<dbReference type="InParanoid" id="Q5XJV7"/>
<dbReference type="OMA" id="XVSLLEY"/>
<dbReference type="PhylomeDB" id="Q5XJV7"/>
<dbReference type="TreeFam" id="TF106417"/>
<dbReference type="BioGRID-ORCS" id="72895">
    <property type="hits" value="8 hits in 85 CRISPR screens"/>
</dbReference>
<dbReference type="ChiTaRS" id="Setd5">
    <property type="organism name" value="mouse"/>
</dbReference>
<dbReference type="PRO" id="PR:Q5XJV7"/>
<dbReference type="Proteomes" id="UP000000589">
    <property type="component" value="Chromosome 6"/>
</dbReference>
<dbReference type="RNAct" id="Q5XJV7">
    <property type="molecule type" value="protein"/>
</dbReference>
<dbReference type="Bgee" id="ENSMUSG00000034269">
    <property type="expression patterns" value="Expressed in undifferentiated genital tubercle and 240 other cell types or tissues"/>
</dbReference>
<dbReference type="GO" id="GO:0000785">
    <property type="term" value="C:chromatin"/>
    <property type="evidence" value="ECO:0000314"/>
    <property type="project" value="UniProtKB"/>
</dbReference>
<dbReference type="GO" id="GO:0000791">
    <property type="term" value="C:euchromatin"/>
    <property type="evidence" value="ECO:0000314"/>
    <property type="project" value="UniProtKB"/>
</dbReference>
<dbReference type="GO" id="GO:0005654">
    <property type="term" value="C:nucleoplasm"/>
    <property type="evidence" value="ECO:0007669"/>
    <property type="project" value="Ensembl"/>
</dbReference>
<dbReference type="GO" id="GO:0005634">
    <property type="term" value="C:nucleus"/>
    <property type="evidence" value="ECO:0000314"/>
    <property type="project" value="UniProtKB"/>
</dbReference>
<dbReference type="GO" id="GO:0046975">
    <property type="term" value="F:histone H3K36 methyltransferase activity"/>
    <property type="evidence" value="ECO:0000315"/>
    <property type="project" value="UniProtKB"/>
</dbReference>
<dbReference type="GO" id="GO:0046974">
    <property type="term" value="F:histone H3K9 methyltransferase activity"/>
    <property type="evidence" value="ECO:0000314"/>
    <property type="project" value="UniProtKB"/>
</dbReference>
<dbReference type="GO" id="GO:0003714">
    <property type="term" value="F:transcription corepressor activity"/>
    <property type="evidence" value="ECO:0000314"/>
    <property type="project" value="GO_Central"/>
</dbReference>
<dbReference type="GO" id="GO:0050890">
    <property type="term" value="P:cognition"/>
    <property type="evidence" value="ECO:0000315"/>
    <property type="project" value="UniProtKB"/>
</dbReference>
<dbReference type="GO" id="GO:0032259">
    <property type="term" value="P:methylation"/>
    <property type="evidence" value="ECO:0007669"/>
    <property type="project" value="UniProtKB-KW"/>
</dbReference>
<dbReference type="GO" id="GO:0016480">
    <property type="term" value="P:negative regulation of transcription by RNA polymerase III"/>
    <property type="evidence" value="ECO:0000315"/>
    <property type="project" value="UniProtKB"/>
</dbReference>
<dbReference type="GO" id="GO:1902275">
    <property type="term" value="P:regulation of chromatin organization"/>
    <property type="evidence" value="ECO:0000315"/>
    <property type="project" value="UniProtKB"/>
</dbReference>
<dbReference type="GO" id="GO:0032784">
    <property type="term" value="P:regulation of DNA-templated transcription elongation"/>
    <property type="evidence" value="ECO:0000315"/>
    <property type="project" value="UniProtKB"/>
</dbReference>
<dbReference type="GO" id="GO:0051963">
    <property type="term" value="P:regulation of synapse assembly"/>
    <property type="evidence" value="ECO:0000315"/>
    <property type="project" value="UniProtKB"/>
</dbReference>
<dbReference type="CDD" id="cd19181">
    <property type="entry name" value="SET_SETD5"/>
    <property type="match status" value="1"/>
</dbReference>
<dbReference type="FunFam" id="2.170.270.10:FF:000009">
    <property type="entry name" value="SET domain-containing protein 5"/>
    <property type="match status" value="1"/>
</dbReference>
<dbReference type="Gene3D" id="2.170.270.10">
    <property type="entry name" value="SET domain"/>
    <property type="match status" value="1"/>
</dbReference>
<dbReference type="InterPro" id="IPR001214">
    <property type="entry name" value="SET_dom"/>
</dbReference>
<dbReference type="InterPro" id="IPR046341">
    <property type="entry name" value="SET_dom_sf"/>
</dbReference>
<dbReference type="InterPro" id="IPR044433">
    <property type="entry name" value="SETD5_SET"/>
</dbReference>
<dbReference type="PANTHER" id="PTHR46462:SF1">
    <property type="entry name" value="HISTONE-LYSINE N-METHYLTRANSFERASE SETD5"/>
    <property type="match status" value="1"/>
</dbReference>
<dbReference type="PANTHER" id="PTHR46462">
    <property type="entry name" value="UPSET, ISOFORM A"/>
    <property type="match status" value="1"/>
</dbReference>
<dbReference type="Pfam" id="PF00856">
    <property type="entry name" value="SET"/>
    <property type="match status" value="1"/>
</dbReference>
<dbReference type="SMART" id="SM00317">
    <property type="entry name" value="SET"/>
    <property type="match status" value="1"/>
</dbReference>
<dbReference type="SUPFAM" id="SSF82199">
    <property type="entry name" value="SET domain"/>
    <property type="match status" value="1"/>
</dbReference>
<dbReference type="PROSITE" id="PS50280">
    <property type="entry name" value="SET"/>
    <property type="match status" value="1"/>
</dbReference>
<evidence type="ECO:0000250" key="1">
    <source>
        <dbReference type="UniProtKB" id="Q9C0A6"/>
    </source>
</evidence>
<evidence type="ECO:0000255" key="2">
    <source>
        <dbReference type="PROSITE-ProRule" id="PRU00190"/>
    </source>
</evidence>
<evidence type="ECO:0000256" key="3">
    <source>
        <dbReference type="SAM" id="MobiDB-lite"/>
    </source>
</evidence>
<evidence type="ECO:0000269" key="4">
    <source>
    </source>
</evidence>
<evidence type="ECO:0000269" key="5">
    <source>
    </source>
</evidence>
<evidence type="ECO:0000269" key="6">
    <source>
    </source>
</evidence>
<evidence type="ECO:0000269" key="7">
    <source>
    </source>
</evidence>
<evidence type="ECO:0000269" key="8">
    <source>
    </source>
</evidence>
<evidence type="ECO:0000303" key="9">
    <source>
    </source>
</evidence>
<evidence type="ECO:0000303" key="10">
    <source>
    </source>
</evidence>
<evidence type="ECO:0000303" key="11">
    <source>
    </source>
</evidence>
<evidence type="ECO:0000303" key="12">
    <source>
    </source>
</evidence>
<evidence type="ECO:0000305" key="13"/>
<evidence type="ECO:0000305" key="14">
    <source>
    </source>
</evidence>
<evidence type="ECO:0000312" key="15">
    <source>
        <dbReference type="MGI" id="MGI:1920145"/>
    </source>
</evidence>
<evidence type="ECO:0007744" key="16">
    <source>
    </source>
</evidence>
<evidence type="ECO:0007744" key="17">
    <source>
    </source>
</evidence>
<sequence>MSIAIPLGVTTPDTSYSDMAAGSDPESVEASPAVNEKSVYSTHNYGTTQRHGCRGLPYATIIPRSDLNGLPSPVEERCGDSPNSEGETVPTWCPCGLSQDGFLLNCDKCRGMSRGKVIRLHRRKQDNISGGDSSATESWDEELSPSTVLYTATQHTPTSITLTVRRTKPKKRKKSPEKGRAAPKTKKIKNSPSEAQNLDENTTEGWENRIRLWTDQYEEAFTNQYSADVQNALEQHLHSNKEFVGKPAILDTINKTELACNNTVIGSQMQLQLGRVTRVQKHRKILRAARDLALDTLIIEYRGKVMLRQQFEVNGHFFKKPYPFVLFYSKFNGVEMCVDARTFGNDARFIRRSCTPNAEVRHMIADGMIHLCIYAVSAITKDAEVTIAFDYEYSNCNYKVDCACHKGNRNCPIQKRNPNAAELPLPPPPSFPTIGAETRRRKARRKELELEQQNEVPEENPDPQPQEVPEKVTVSNEHEEVDNPEEKPEEEEKEEATDDQENSAHSRRTREDRKVEAIMHAFESLEKRKKRRDQPVEQSSSDIEITTSSSEIVVGEETKTAAPESEVSSPVSNVAIPSTPQSTGVNTRRSSHAGDVAAEKPIPKPPPAKPSRPRPKSRISRYRTSSAQRLKRQKQAIAQQAELSQAALEEGGSNNSVTPPEAGNTDSSGENRQLTGSDPTVISVTGSHVNRAASKYPKTKKYLVTEWLNDKAEKQECPVECPLRITTDPTVLATTLNMLPGLIHSPLICTTPKHYIRFGSPFMPERRRRPLLPDGTFSSCKKRWIKQALEEGMTQTSSVPQETRTQHLYQSNETSNSSSICKDNADLLSPLKKWKSRYLMEQNITKLLQPLSPVTPPPPSSGSKSPQLTTPGQTHPGEEECRNGYSLMFSPITSLTTASRSNTPLQFELCHRKDLDLTKVGFPDSSTHSCADRPSLLNCNHPDLASHPSVVPTSEAGFPSRSGDGPQTLLRNSDQAFRTEFNLMYAYSPLNAMPRADGLYRGSPLVGDRKPLHLDGGYCSPAEGFSSRYEHGFMKDLSRGSMSPGGERTCEGVPSAPQNPPQRKKVSLLEYRKRKQEAKENSGGGNDSSQSKSKSSGAGQGSSNSVSDTGAHGVQGSSAGTPSSPHKKFSPSHSSASHLEAVSPSDSRGTSSSHCRPQENISSRWMVPTSVERLREGGSIPKVLRSSVRVAQKGEPSPTWESNITEKESDPADGEGPEPLSSALSKGATVYSPSRYSYQLLQCDSPRTESQSLLQQSSSPFRGHPTQSPGYSYRTTALRPGNPPSHGSSESSLSSTSYPSPAHPVSTDSLAPFTGTPGYYSSQPHSGNSTGSNLPRRSCSSSAASPTPQGPSDSPTSDSVSQSSTGTLSSTSFPQNSRSSLPSDLRTISLPNAGQSAAYQASRVSAVSNSQHYPHRGSGGVHQYRLQPLQGSGVKTQTGLS</sequence>
<keyword id="KW-0025">Alternative splicing</keyword>
<keyword id="KW-0156">Chromatin regulator</keyword>
<keyword id="KW-0158">Chromosome</keyword>
<keyword id="KW-0489">Methyltransferase</keyword>
<keyword id="KW-0539">Nucleus</keyword>
<keyword id="KW-0597">Phosphoprotein</keyword>
<keyword id="KW-1185">Reference proteome</keyword>
<keyword id="KW-0804">Transcription</keyword>
<keyword id="KW-0805">Transcription regulation</keyword>
<keyword id="KW-0808">Transferase</keyword>
<reference key="1">
    <citation type="journal article" date="2003" name="DNA Res.">
        <title>Prediction of the coding sequences of mouse homologues of KIAA gene: II. The complete nucleotide sequences of 400 mouse KIAA-homologous cDNAs identified by screening of terminal sequences of cDNA clones randomly sampled from size-fractionated libraries.</title>
        <authorList>
            <person name="Okazaki N."/>
            <person name="Kikuno R."/>
            <person name="Ohara R."/>
            <person name="Inamoto S."/>
            <person name="Aizawa H."/>
            <person name="Yuasa S."/>
            <person name="Nakajima D."/>
            <person name="Nagase T."/>
            <person name="Ohara O."/>
            <person name="Koga H."/>
        </authorList>
    </citation>
    <scope>NUCLEOTIDE SEQUENCE [LARGE SCALE MRNA] (ISOFORM 1)</scope>
    <source>
        <tissue>Brain</tissue>
    </source>
</reference>
<reference key="2">
    <citation type="journal article" date="2005" name="Science">
        <title>The transcriptional landscape of the mammalian genome.</title>
        <authorList>
            <person name="Carninci P."/>
            <person name="Kasukawa T."/>
            <person name="Katayama S."/>
            <person name="Gough J."/>
            <person name="Frith M.C."/>
            <person name="Maeda N."/>
            <person name="Oyama R."/>
            <person name="Ravasi T."/>
            <person name="Lenhard B."/>
            <person name="Wells C."/>
            <person name="Kodzius R."/>
            <person name="Shimokawa K."/>
            <person name="Bajic V.B."/>
            <person name="Brenner S.E."/>
            <person name="Batalov S."/>
            <person name="Forrest A.R."/>
            <person name="Zavolan M."/>
            <person name="Davis M.J."/>
            <person name="Wilming L.G."/>
            <person name="Aidinis V."/>
            <person name="Allen J.E."/>
            <person name="Ambesi-Impiombato A."/>
            <person name="Apweiler R."/>
            <person name="Aturaliya R.N."/>
            <person name="Bailey T.L."/>
            <person name="Bansal M."/>
            <person name="Baxter L."/>
            <person name="Beisel K.W."/>
            <person name="Bersano T."/>
            <person name="Bono H."/>
            <person name="Chalk A.M."/>
            <person name="Chiu K.P."/>
            <person name="Choudhary V."/>
            <person name="Christoffels A."/>
            <person name="Clutterbuck D.R."/>
            <person name="Crowe M.L."/>
            <person name="Dalla E."/>
            <person name="Dalrymple B.P."/>
            <person name="de Bono B."/>
            <person name="Della Gatta G."/>
            <person name="di Bernardo D."/>
            <person name="Down T."/>
            <person name="Engstrom P."/>
            <person name="Fagiolini M."/>
            <person name="Faulkner G."/>
            <person name="Fletcher C.F."/>
            <person name="Fukushima T."/>
            <person name="Furuno M."/>
            <person name="Futaki S."/>
            <person name="Gariboldi M."/>
            <person name="Georgii-Hemming P."/>
            <person name="Gingeras T.R."/>
            <person name="Gojobori T."/>
            <person name="Green R.E."/>
            <person name="Gustincich S."/>
            <person name="Harbers M."/>
            <person name="Hayashi Y."/>
            <person name="Hensch T.K."/>
            <person name="Hirokawa N."/>
            <person name="Hill D."/>
            <person name="Huminiecki L."/>
            <person name="Iacono M."/>
            <person name="Ikeo K."/>
            <person name="Iwama A."/>
            <person name="Ishikawa T."/>
            <person name="Jakt M."/>
            <person name="Kanapin A."/>
            <person name="Katoh M."/>
            <person name="Kawasawa Y."/>
            <person name="Kelso J."/>
            <person name="Kitamura H."/>
            <person name="Kitano H."/>
            <person name="Kollias G."/>
            <person name="Krishnan S.P."/>
            <person name="Kruger A."/>
            <person name="Kummerfeld S.K."/>
            <person name="Kurochkin I.V."/>
            <person name="Lareau L.F."/>
            <person name="Lazarevic D."/>
            <person name="Lipovich L."/>
            <person name="Liu J."/>
            <person name="Liuni S."/>
            <person name="McWilliam S."/>
            <person name="Madan Babu M."/>
            <person name="Madera M."/>
            <person name="Marchionni L."/>
            <person name="Matsuda H."/>
            <person name="Matsuzawa S."/>
            <person name="Miki H."/>
            <person name="Mignone F."/>
            <person name="Miyake S."/>
            <person name="Morris K."/>
            <person name="Mottagui-Tabar S."/>
            <person name="Mulder N."/>
            <person name="Nakano N."/>
            <person name="Nakauchi H."/>
            <person name="Ng P."/>
            <person name="Nilsson R."/>
            <person name="Nishiguchi S."/>
            <person name="Nishikawa S."/>
            <person name="Nori F."/>
            <person name="Ohara O."/>
            <person name="Okazaki Y."/>
            <person name="Orlando V."/>
            <person name="Pang K.C."/>
            <person name="Pavan W.J."/>
            <person name="Pavesi G."/>
            <person name="Pesole G."/>
            <person name="Petrovsky N."/>
            <person name="Piazza S."/>
            <person name="Reed J."/>
            <person name="Reid J.F."/>
            <person name="Ring B.Z."/>
            <person name="Ringwald M."/>
            <person name="Rost B."/>
            <person name="Ruan Y."/>
            <person name="Salzberg S.L."/>
            <person name="Sandelin A."/>
            <person name="Schneider C."/>
            <person name="Schoenbach C."/>
            <person name="Sekiguchi K."/>
            <person name="Semple C.A."/>
            <person name="Seno S."/>
            <person name="Sessa L."/>
            <person name="Sheng Y."/>
            <person name="Shibata Y."/>
            <person name="Shimada H."/>
            <person name="Shimada K."/>
            <person name="Silva D."/>
            <person name="Sinclair B."/>
            <person name="Sperling S."/>
            <person name="Stupka E."/>
            <person name="Sugiura K."/>
            <person name="Sultana R."/>
            <person name="Takenaka Y."/>
            <person name="Taki K."/>
            <person name="Tammoja K."/>
            <person name="Tan S.L."/>
            <person name="Tang S."/>
            <person name="Taylor M.S."/>
            <person name="Tegner J."/>
            <person name="Teichmann S.A."/>
            <person name="Ueda H.R."/>
            <person name="van Nimwegen E."/>
            <person name="Verardo R."/>
            <person name="Wei C.L."/>
            <person name="Yagi K."/>
            <person name="Yamanishi H."/>
            <person name="Zabarovsky E."/>
            <person name="Zhu S."/>
            <person name="Zimmer A."/>
            <person name="Hide W."/>
            <person name="Bult C."/>
            <person name="Grimmond S.M."/>
            <person name="Teasdale R.D."/>
            <person name="Liu E.T."/>
            <person name="Brusic V."/>
            <person name="Quackenbush J."/>
            <person name="Wahlestedt C."/>
            <person name="Mattick J.S."/>
            <person name="Hume D.A."/>
            <person name="Kai C."/>
            <person name="Sasaki D."/>
            <person name="Tomaru Y."/>
            <person name="Fukuda S."/>
            <person name="Kanamori-Katayama M."/>
            <person name="Suzuki M."/>
            <person name="Aoki J."/>
            <person name="Arakawa T."/>
            <person name="Iida J."/>
            <person name="Imamura K."/>
            <person name="Itoh M."/>
            <person name="Kato T."/>
            <person name="Kawaji H."/>
            <person name="Kawagashira N."/>
            <person name="Kawashima T."/>
            <person name="Kojima M."/>
            <person name="Kondo S."/>
            <person name="Konno H."/>
            <person name="Nakano K."/>
            <person name="Ninomiya N."/>
            <person name="Nishio T."/>
            <person name="Okada M."/>
            <person name="Plessy C."/>
            <person name="Shibata K."/>
            <person name="Shiraki T."/>
            <person name="Suzuki S."/>
            <person name="Tagami M."/>
            <person name="Waki K."/>
            <person name="Watahiki A."/>
            <person name="Okamura-Oho Y."/>
            <person name="Suzuki H."/>
            <person name="Kawai J."/>
            <person name="Hayashizaki Y."/>
        </authorList>
    </citation>
    <scope>NUCLEOTIDE SEQUENCE [LARGE SCALE MRNA] (ISOFORM 3)</scope>
    <scope>NUCLEOTIDE SEQUENCE [LARGE SCALE MRNA] OF 245-1071</scope>
    <source>
        <strain>C57BL/6J</strain>
        <tissue>Eye</tissue>
    </source>
</reference>
<reference key="3">
    <citation type="journal article" date="2004" name="Genome Res.">
        <title>The status, quality, and expansion of the NIH full-length cDNA project: the Mammalian Gene Collection (MGC).</title>
        <authorList>
            <consortium name="The MGC Project Team"/>
        </authorList>
    </citation>
    <scope>NUCLEOTIDE SEQUENCE [LARGE SCALE MRNA] (ISOFORM 2)</scope>
    <source>
        <strain>C57BL/6J</strain>
        <tissue>Brain</tissue>
    </source>
</reference>
<reference key="4">
    <citation type="journal article" date="2007" name="Proc. Natl. Acad. Sci. U.S.A.">
        <title>Large-scale phosphorylation analysis of mouse liver.</title>
        <authorList>
            <person name="Villen J."/>
            <person name="Beausoleil S.A."/>
            <person name="Gerber S.A."/>
            <person name="Gygi S.P."/>
        </authorList>
    </citation>
    <scope>PHOSPHORYLATION [LARGE SCALE ANALYSIS] AT SER-852</scope>
    <scope>IDENTIFICATION BY MASS SPECTROMETRY [LARGE SCALE ANALYSIS]</scope>
    <source>
        <tissue>Liver</tissue>
    </source>
</reference>
<reference key="5">
    <citation type="journal article" date="2010" name="Cell">
        <title>A tissue-specific atlas of mouse protein phosphorylation and expression.</title>
        <authorList>
            <person name="Huttlin E.L."/>
            <person name="Jedrychowski M.P."/>
            <person name="Elias J.E."/>
            <person name="Goswami T."/>
            <person name="Rad R."/>
            <person name="Beausoleil S.A."/>
            <person name="Villen J."/>
            <person name="Haas W."/>
            <person name="Sowa M.E."/>
            <person name="Gygi S.P."/>
        </authorList>
    </citation>
    <scope>PHOSPHORYLATION [LARGE SCALE ANALYSIS] AT SER-72; SER-852 AND THR-855</scope>
    <scope>PHOSPHORYLATION [LARGE SCALE ANALYSIS] AT THR-70 AND SER-74 (ISOFORM 2)</scope>
    <scope>IDENTIFICATION BY MASS SPECTROMETRY [LARGE SCALE ANALYSIS]</scope>
    <source>
        <tissue>Brain</tissue>
        <tissue>Kidney</tissue>
        <tissue>Liver</tissue>
        <tissue>Lung</tissue>
        <tissue>Spleen</tissue>
        <tissue>Testis</tissue>
    </source>
</reference>
<reference key="6">
    <citation type="journal article" date="2012" name="Cell">
        <title>Prdm3 and Prdm16 are H3K9me1 methyltransferases required for mammalian heterochromatin integrity.</title>
        <authorList>
            <person name="Pinheiro I."/>
            <person name="Margueron R."/>
            <person name="Shukeir N."/>
            <person name="Eisold M."/>
            <person name="Fritzsch C."/>
            <person name="Richter F.M."/>
            <person name="Mittler G."/>
            <person name="Genoud C."/>
            <person name="Goyama S."/>
            <person name="Kurokawa M."/>
            <person name="Son J."/>
            <person name="Reinberg D."/>
            <person name="Lachner M."/>
            <person name="Jenuwein T."/>
        </authorList>
    </citation>
    <scope>FUNCTION</scope>
    <scope>CATALYTIC ACTIVITY</scope>
</reference>
<reference key="7">
    <citation type="journal article" date="2016" name="Development">
        <title>Setd5 is essential for mammalian development and the co-transcriptional regulation of histone acetylation.</title>
        <authorList>
            <person name="Osipovich A.B."/>
            <person name="Gangula R."/>
            <person name="Vianna P.G."/>
            <person name="Magnuson M.A."/>
        </authorList>
    </citation>
    <scope>FUNCTION</scope>
    <scope>SUBCELLULAR LOCATION</scope>
    <scope>INTERACTION WITH LEO1; CTR9; CDC73 AND NCOR1</scope>
    <scope>DISRUPTION PHENOTYPE</scope>
    <scope>TISSUE SPECIFICITY</scope>
</reference>
<reference key="8">
    <citation type="journal article" date="2018" name="Nat. Neurosci.">
        <title>Haploinsufficiency of the intellectual disability gene SETD5 disturbs developmental gene expression and cognition.</title>
        <authorList>
            <person name="Deliu E."/>
            <person name="Arecco N."/>
            <person name="Morandell J."/>
            <person name="Dotter C.P."/>
            <person name="Contreras X."/>
            <person name="Girardot C."/>
            <person name="Kaesper E.L."/>
            <person name="Kozlova A."/>
            <person name="Kishi K."/>
            <person name="Chiaradia I."/>
            <person name="Noh K.M."/>
            <person name="Novarino G."/>
        </authorList>
    </citation>
    <scope>FUNCTION</scope>
    <scope>DISRUPTION PHENOTYPE</scope>
    <scope>INTERACTION WITH HDAC3</scope>
</reference>
<reference key="9">
    <citation type="journal article" date="2019" name="Neuron">
        <title>SETD5 regulates chromatin methylation state and preserves global transcriptional fidelity during brain development and neuronal wiring.</title>
        <authorList>
            <person name="Sessa A."/>
            <person name="Fagnocchi L."/>
            <person name="Mastrototaro G."/>
            <person name="Massimino L."/>
            <person name="Zaghi M."/>
            <person name="Indrigo M."/>
            <person name="Cattaneo S."/>
            <person name="Martini D."/>
            <person name="Gabellini C."/>
            <person name="Pucci C."/>
            <person name="Fasciani A."/>
            <person name="Belli R."/>
            <person name="Taverna S."/>
            <person name="Andreazzoli M."/>
            <person name="Zippo A."/>
            <person name="Broccoli V."/>
        </authorList>
    </citation>
    <scope>FUNCTION</scope>
    <scope>CATALYTIC ACTIVITY</scope>
    <scope>SUBCELLULAR LOCATION</scope>
    <scope>DISRUPTION PHENOTYPE</scope>
</reference>
<reference key="10">
    <citation type="journal article" date="2019" name="Transl. Psychiatry">
        <title>Setd5 haploinsufficiency alters neuronal network connectivity and leads to autistic-like behaviors in mice.</title>
        <authorList>
            <person name="Moore S.M."/>
            <person name="Seidman J.S."/>
            <person name="Ellegood J."/>
            <person name="Gao R."/>
            <person name="Savchenko A."/>
            <person name="Troutman T.D."/>
            <person name="Abe Y."/>
            <person name="Stender J."/>
            <person name="Lee D."/>
            <person name="Wang S."/>
            <person name="Voytek B."/>
            <person name="Lerch J.P."/>
            <person name="Suh H."/>
            <person name="Glass C.K."/>
            <person name="Muotri A.R."/>
        </authorList>
    </citation>
    <scope>DISRUPTION PHENOTYPE</scope>
</reference>
<protein>
    <recommendedName>
        <fullName evidence="13">Histone-lysine N-methyltransferase SETD5</fullName>
        <ecNumber evidence="8">2.1.1.359</ecNumber>
        <ecNumber evidence="14">2.1.1.367</ecNumber>
    </recommendedName>
    <alternativeName>
        <fullName evidence="13">SET domain-containing protein 5</fullName>
    </alternativeName>
</protein>
<comment type="function">
    <text evidence="4 5 6 8">Chromatin regulator required for brain development: acts as a regulator of RNA elongation rate, thereby regulating neural stem cell (NSC) proliferation and synaptic transmission (PubMed:30455454, PubMed:31515109). May act by mediating trimethylation of 'Lys-36' of histone H3 (H3K36me3), which is essential to allow on-time RNA elongation dynamics (PubMed:31515109). Also monomethylates 'Lys-9' of histone H3 (H3K9me1) in vitro (PubMed:22939622). The relevance of histone methyltransferase activity is however subject to discussion (PubMed:27864380, PubMed:30455454).</text>
</comment>
<comment type="catalytic activity">
    <reaction evidence="14">
        <text>L-lysyl(9)-[histone H3] + S-adenosyl-L-methionine = N(6)-methyl-L-lysyl(9)-[histone H3] + S-adenosyl-L-homocysteine + H(+)</text>
        <dbReference type="Rhea" id="RHEA:60280"/>
        <dbReference type="Rhea" id="RHEA-COMP:15542"/>
        <dbReference type="Rhea" id="RHEA-COMP:15546"/>
        <dbReference type="ChEBI" id="CHEBI:15378"/>
        <dbReference type="ChEBI" id="CHEBI:29969"/>
        <dbReference type="ChEBI" id="CHEBI:57856"/>
        <dbReference type="ChEBI" id="CHEBI:59789"/>
        <dbReference type="ChEBI" id="CHEBI:61929"/>
        <dbReference type="EC" id="2.1.1.367"/>
    </reaction>
</comment>
<comment type="catalytic activity">
    <reaction evidence="8">
        <text>L-lysyl(36)-[histone H3] + 3 S-adenosyl-L-methionine = N(6),N(6),N(6)-trimethyl-L-lysyl(36)-[histone H3] + 3 S-adenosyl-L-homocysteine + 3 H(+)</text>
        <dbReference type="Rhea" id="RHEA:60324"/>
        <dbReference type="Rhea" id="RHEA-COMP:9785"/>
        <dbReference type="Rhea" id="RHEA-COMP:15536"/>
        <dbReference type="ChEBI" id="CHEBI:15378"/>
        <dbReference type="ChEBI" id="CHEBI:29969"/>
        <dbReference type="ChEBI" id="CHEBI:57856"/>
        <dbReference type="ChEBI" id="CHEBI:59789"/>
        <dbReference type="ChEBI" id="CHEBI:61961"/>
        <dbReference type="EC" id="2.1.1.359"/>
    </reaction>
    <physiologicalReaction direction="left-to-right" evidence="8">
        <dbReference type="Rhea" id="RHEA:60325"/>
    </physiologicalReaction>
</comment>
<comment type="subunit">
    <text evidence="5 6">Interacts with components of the PAF1 complex (PAF1C) such as LEO1, CTR9 and CDC73 (PubMed:27864380). Interacts with NCOR1 (PubMed:27864380). Interacts with HDAC3 (PubMed:30455454).</text>
</comment>
<comment type="subcellular location">
    <subcellularLocation>
        <location evidence="5">Nucleus</location>
    </subcellularLocation>
    <subcellularLocation>
        <location evidence="8">Chromosome</location>
    </subcellularLocation>
    <text evidence="8">Localizes to active transcribed genes.</text>
</comment>
<comment type="alternative products">
    <event type="alternative splicing"/>
    <isoform>
        <id>Q5XJV7-1</id>
        <name>1</name>
        <sequence type="displayed"/>
    </isoform>
    <isoform>
        <id>Q5XJV7-2</id>
        <name>2</name>
        <sequence type="described" ref="VSP_024097"/>
    </isoform>
    <isoform>
        <id>Q5XJV7-3</id>
        <name>3</name>
        <sequence type="described" ref="VSP_024096"/>
    </isoform>
</comment>
<comment type="tissue specificity">
    <text evidence="5">Ubiquitously expressed.</text>
</comment>
<comment type="disruption phenotype">
    <text evidence="5 6 7 8">Mid-gestation lethality due to severe developmental delay such as vascular abnormalities in the embryo and placenta, reduced cellular proliferation and increased apoptosis (PubMed:27864380). Defects are probably due to a widespread impairment in the regulation of gene expression (PubMed:27864380). Setd5-haploinsufficient mice display altered neuronal network connectivity leading to autistic-like behaviors (PubMed:30455454, PubMed:30655503, PubMed:31515109). Haploinsufficient Setd5 cortical neurons show reduced synaptic density and neuritic outgrowtho, with corresponding decreases in network activity and synchrony by electrophysiology (PubMed:30655503). Haploinsufficient mice display several autism-like behaviors, including hyperactivity, cognitive deficit, and altered social interactions (PubMed:30455454, PubMed:30655503, PubMed:31515109).</text>
</comment>
<comment type="caution">
    <text evidence="6 8">According to a report, lacks histone methyltransferase activity and regulates chromatin by interacting with HDAC3 and PAF1 complex (PAF1C) complex (PubMed:30455454). According to another publication, displays histone methyltransferase activity and directly trimethylates 'Lys-36' of histone H3 (H3K36me3) (PubMed:31515109).</text>
</comment>
<comment type="sequence caution" evidence="13">
    <conflict type="erroneous initiation">
        <sequence resource="EMBL-CDS" id="BAC33569"/>
    </conflict>
</comment>
<comment type="sequence caution" evidence="13">
    <conflict type="erroneous initiation">
        <sequence resource="EMBL-CDS" id="BAC65833"/>
    </conflict>
</comment>